<name>RSMA_AERPE</name>
<comment type="function">
    <text evidence="1">Specifically dimethylates two adjacent adenosines in the loop of a conserved hairpin near the 3'-end of 16S rRNA in the 30S particle. May play a critical role in biogenesis of 30S subunits (By similarity).</text>
</comment>
<comment type="subcellular location">
    <subcellularLocation>
        <location evidence="3">Cytoplasm</location>
    </subcellularLocation>
</comment>
<comment type="similarity">
    <text evidence="2">Belongs to the class I-like SAM-binding methyltransferase superfamily. rRNA adenine N(6)-methyltransferase family. RsmA subfamily.</text>
</comment>
<evidence type="ECO:0000250" key="1"/>
<evidence type="ECO:0000255" key="2">
    <source>
        <dbReference type="PROSITE-ProRule" id="PRU01026"/>
    </source>
</evidence>
<evidence type="ECO:0000305" key="3"/>
<feature type="chain" id="PRO_0000101651" description="Probable ribosomal RNA small subunit methyltransferase A">
    <location>
        <begin position="1"/>
        <end position="277"/>
    </location>
</feature>
<feature type="binding site" evidence="2">
    <location>
        <position position="35"/>
    </location>
    <ligand>
        <name>S-adenosyl-L-methionine</name>
        <dbReference type="ChEBI" id="CHEBI:59789"/>
    </ligand>
</feature>
<feature type="binding site" evidence="2">
    <location>
        <position position="37"/>
    </location>
    <ligand>
        <name>S-adenosyl-L-methionine</name>
        <dbReference type="ChEBI" id="CHEBI:59789"/>
    </ligand>
</feature>
<feature type="binding site" evidence="2">
    <location>
        <position position="65"/>
    </location>
    <ligand>
        <name>S-adenosyl-L-methionine</name>
        <dbReference type="ChEBI" id="CHEBI:59789"/>
    </ligand>
</feature>
<feature type="binding site" evidence="2">
    <location>
        <position position="86"/>
    </location>
    <ligand>
        <name>S-adenosyl-L-methionine</name>
        <dbReference type="ChEBI" id="CHEBI:59789"/>
    </ligand>
</feature>
<feature type="binding site" evidence="2">
    <location>
        <position position="109"/>
    </location>
    <ligand>
        <name>S-adenosyl-L-methionine</name>
        <dbReference type="ChEBI" id="CHEBI:59789"/>
    </ligand>
</feature>
<feature type="binding site" evidence="2">
    <location>
        <position position="125"/>
    </location>
    <ligand>
        <name>S-adenosyl-L-methionine</name>
        <dbReference type="ChEBI" id="CHEBI:59789"/>
    </ligand>
</feature>
<protein>
    <recommendedName>
        <fullName>Probable ribosomal RNA small subunit methyltransferase A</fullName>
        <ecNumber>2.1.1.-</ecNumber>
    </recommendedName>
    <alternativeName>
        <fullName>16S rRNA dimethyladenosine transferase</fullName>
    </alternativeName>
    <alternativeName>
        <fullName>16S rRNA dimethylase</fullName>
    </alternativeName>
    <alternativeName>
        <fullName>S-adenosylmethionine-6-N',N'-adenosyl(rRNA) dimethyltransferase</fullName>
    </alternativeName>
</protein>
<organism>
    <name type="scientific">Aeropyrum pernix (strain ATCC 700893 / DSM 11879 / JCM 9820 / NBRC 100138 / K1)</name>
    <dbReference type="NCBI Taxonomy" id="272557"/>
    <lineage>
        <taxon>Archaea</taxon>
        <taxon>Thermoproteota</taxon>
        <taxon>Thermoprotei</taxon>
        <taxon>Desulfurococcales</taxon>
        <taxon>Desulfurococcaceae</taxon>
        <taxon>Aeropyrum</taxon>
    </lineage>
</organism>
<accession>Q9YEM5</accession>
<keyword id="KW-0963">Cytoplasm</keyword>
<keyword id="KW-0489">Methyltransferase</keyword>
<keyword id="KW-1185">Reference proteome</keyword>
<keyword id="KW-0694">RNA-binding</keyword>
<keyword id="KW-0698">rRNA processing</keyword>
<keyword id="KW-0949">S-adenosyl-L-methionine</keyword>
<keyword id="KW-0808">Transferase</keyword>
<reference key="1">
    <citation type="journal article" date="1999" name="DNA Res.">
        <title>Complete genome sequence of an aerobic hyper-thermophilic crenarchaeon, Aeropyrum pernix K1.</title>
        <authorList>
            <person name="Kawarabayasi Y."/>
            <person name="Hino Y."/>
            <person name="Horikawa H."/>
            <person name="Yamazaki S."/>
            <person name="Haikawa Y."/>
            <person name="Jin-no K."/>
            <person name="Takahashi M."/>
            <person name="Sekine M."/>
            <person name="Baba S."/>
            <person name="Ankai A."/>
            <person name="Kosugi H."/>
            <person name="Hosoyama A."/>
            <person name="Fukui S."/>
            <person name="Nagai Y."/>
            <person name="Nishijima K."/>
            <person name="Nakazawa H."/>
            <person name="Takamiya M."/>
            <person name="Masuda S."/>
            <person name="Funahashi T."/>
            <person name="Tanaka T."/>
            <person name="Kudoh Y."/>
            <person name="Yamazaki J."/>
            <person name="Kushida N."/>
            <person name="Oguchi A."/>
            <person name="Aoki K."/>
            <person name="Kubota K."/>
            <person name="Nakamura Y."/>
            <person name="Nomura N."/>
            <person name="Sako Y."/>
            <person name="Kikuchi H."/>
        </authorList>
    </citation>
    <scope>NUCLEOTIDE SEQUENCE [LARGE SCALE GENOMIC DNA]</scope>
    <source>
        <strain>ATCC 700893 / DSM 11879 / JCM 9820 / NBRC 100138 / K1</strain>
    </source>
</reference>
<sequence length="277" mass="29826">MPPGSGRGGRRRAESLVREVLGLAGLRPSDRLGQHFLIDDRAVGEFLKPLEKAAAEGIREALEIGPGAGSITLPAAEVLDRIVAVELDNRLASALSRLAPARVAVITGDGVSHAAASQAPLVFSNTPFNLSPAIVEALAVNNRVAAAVLGVQYEVARRMTARPGSRDYSRLSVLVSLVFHAELAGVVRPQAYYPRPQVLTAVVTLRRRRRWRSLYARALELAGCAFTQRNKKASKVLRRCLEAAGCAPPPWLDSLGDARVWMLRPEDFVGLAEACRG</sequence>
<proteinExistence type="inferred from homology"/>
<gene>
    <name type="primary">rsmA</name>
    <name type="synonym">ksgA</name>
    <name type="ordered locus">APE_0553</name>
</gene>
<dbReference type="EC" id="2.1.1.-"/>
<dbReference type="EMBL" id="BA000002">
    <property type="protein sequence ID" value="BAA79521.1"/>
    <property type="molecule type" value="Genomic_DNA"/>
</dbReference>
<dbReference type="PIR" id="A72640">
    <property type="entry name" value="A72640"/>
</dbReference>
<dbReference type="RefSeq" id="WP_010865830.1">
    <property type="nucleotide sequence ID" value="NC_000854.2"/>
</dbReference>
<dbReference type="SMR" id="Q9YEM5"/>
<dbReference type="STRING" id="272557.APE_0553"/>
<dbReference type="EnsemblBacteria" id="BAA79521">
    <property type="protein sequence ID" value="BAA79521"/>
    <property type="gene ID" value="APE_0553"/>
</dbReference>
<dbReference type="GeneID" id="1444722"/>
<dbReference type="KEGG" id="ape:APE_0553"/>
<dbReference type="eggNOG" id="arCOG04131">
    <property type="taxonomic scope" value="Archaea"/>
</dbReference>
<dbReference type="Proteomes" id="UP000002518">
    <property type="component" value="Chromosome"/>
</dbReference>
<dbReference type="GO" id="GO:0005737">
    <property type="term" value="C:cytoplasm"/>
    <property type="evidence" value="ECO:0007669"/>
    <property type="project" value="UniProtKB-SubCell"/>
</dbReference>
<dbReference type="GO" id="GO:0003723">
    <property type="term" value="F:RNA binding"/>
    <property type="evidence" value="ECO:0007669"/>
    <property type="project" value="UniProtKB-KW"/>
</dbReference>
<dbReference type="GO" id="GO:0000179">
    <property type="term" value="F:rRNA (adenine-N6,N6-)-dimethyltransferase activity"/>
    <property type="evidence" value="ECO:0007669"/>
    <property type="project" value="InterPro"/>
</dbReference>
<dbReference type="Gene3D" id="3.40.50.150">
    <property type="entry name" value="Vaccinia Virus protein VP39"/>
    <property type="match status" value="1"/>
</dbReference>
<dbReference type="InterPro" id="IPR001737">
    <property type="entry name" value="KsgA/Erm"/>
</dbReference>
<dbReference type="InterPro" id="IPR020598">
    <property type="entry name" value="rRNA_Ade_methylase_Trfase_N"/>
</dbReference>
<dbReference type="InterPro" id="IPR011530">
    <property type="entry name" value="rRNA_adenine_dimethylase"/>
</dbReference>
<dbReference type="InterPro" id="IPR029063">
    <property type="entry name" value="SAM-dependent_MTases_sf"/>
</dbReference>
<dbReference type="NCBIfam" id="TIGR00755">
    <property type="entry name" value="ksgA"/>
    <property type="match status" value="1"/>
</dbReference>
<dbReference type="PANTHER" id="PTHR11727">
    <property type="entry name" value="DIMETHYLADENOSINE TRANSFERASE"/>
    <property type="match status" value="1"/>
</dbReference>
<dbReference type="PANTHER" id="PTHR11727:SF7">
    <property type="entry name" value="DIMETHYLADENOSINE TRANSFERASE-RELATED"/>
    <property type="match status" value="1"/>
</dbReference>
<dbReference type="Pfam" id="PF00398">
    <property type="entry name" value="RrnaAD"/>
    <property type="match status" value="1"/>
</dbReference>
<dbReference type="SMART" id="SM00650">
    <property type="entry name" value="rADc"/>
    <property type="match status" value="1"/>
</dbReference>
<dbReference type="SUPFAM" id="SSF53335">
    <property type="entry name" value="S-adenosyl-L-methionine-dependent methyltransferases"/>
    <property type="match status" value="1"/>
</dbReference>
<dbReference type="PROSITE" id="PS01131">
    <property type="entry name" value="RRNA_A_DIMETH"/>
    <property type="match status" value="1"/>
</dbReference>
<dbReference type="PROSITE" id="PS51689">
    <property type="entry name" value="SAM_RNA_A_N6_MT"/>
    <property type="match status" value="1"/>
</dbReference>